<protein>
    <recommendedName>
        <fullName evidence="1">Protein p56</fullName>
    </recommendedName>
</protein>
<name>P56_BPGA1</name>
<reference key="1">
    <citation type="submission" date="1996-03" db="EMBL/GenBank/DDBJ databases">
        <title>The phi29 family of phages.</title>
        <authorList>
            <person name="Meijer W.J.J."/>
            <person name="Horcajadas J.A."/>
            <person name="Salas M."/>
        </authorList>
    </citation>
    <scope>NUCLEOTIDE SEQUENCE [LARGE SCALE GENOMIC DNA]</scope>
</reference>
<reference key="2">
    <citation type="journal article" date="2011" name="Mol. Microbiol.">
        <title>Characterization of Bacillus subtilis uracil-DNA glycosylase and its inhibition by phage phi29 protein p56.</title>
        <authorList>
            <person name="Perez-Lago L."/>
            <person name="Serrano-Heras G."/>
            <person name="Banos B."/>
            <person name="Lazaro J.M."/>
            <person name="Alcorlo M."/>
            <person name="Villar L."/>
            <person name="Salas M."/>
        </authorList>
    </citation>
    <scope>FUNCTION</scope>
</reference>
<organism>
    <name type="scientific">Bacillus phage GA-1</name>
    <name type="common">Bacteriophage GA-1</name>
    <dbReference type="NCBI Taxonomy" id="2679898"/>
    <lineage>
        <taxon>Viruses</taxon>
        <taxon>Duplodnaviria</taxon>
        <taxon>Heunggongvirae</taxon>
        <taxon>Uroviricota</taxon>
        <taxon>Caudoviricetes</taxon>
        <taxon>Salasmaviridae</taxon>
        <taxon>Tatarstanvirinae</taxon>
        <taxon>Gaunavirus</taxon>
        <taxon>Gaunavirus GA1</taxon>
    </lineage>
</organism>
<accession>Q9FZX0</accession>
<organismHost>
    <name type="scientific">Bacillus subtilis</name>
    <dbReference type="NCBI Taxonomy" id="1423"/>
</organismHost>
<dbReference type="EMBL" id="X96987">
    <property type="protein sequence ID" value="CAC21523.1"/>
    <property type="molecule type" value="Genomic_DNA"/>
</dbReference>
<dbReference type="RefSeq" id="NP_073684.1">
    <property type="nucleotide sequence ID" value="NC_002649.1"/>
</dbReference>
<dbReference type="GeneID" id="919881"/>
<dbReference type="KEGG" id="vg:919881"/>
<dbReference type="Proteomes" id="UP000002580">
    <property type="component" value="Segment"/>
</dbReference>
<dbReference type="InterPro" id="IPR049384">
    <property type="entry name" value="P56"/>
</dbReference>
<dbReference type="Pfam" id="PF20763">
    <property type="entry name" value="UDG-inhib_P56"/>
    <property type="match status" value="1"/>
</dbReference>
<proteinExistence type="inferred from homology"/>
<evidence type="ECO:0000250" key="1">
    <source>
        <dbReference type="UniProtKB" id="Q38503"/>
    </source>
</evidence>
<evidence type="ECO:0000269" key="2">
    <source>
    </source>
</evidence>
<evidence type="ECO:0000305" key="3"/>
<feature type="chain" id="PRO_0000436074" description="Protein p56">
    <location>
        <begin position="1"/>
        <end position="130"/>
    </location>
</feature>
<sequence>MNKEKNSYRDAIKDVELTMMAIDSHFRTHKGFTDSYLLVMILENEVGETRLEVSEGLTFDEVGYIVGSVSDNILHMHTYNYCEKNREDIYKWLKASRIEKFKSDYAKMLMNMHFGKENNVGSNINLKEEF</sequence>
<comment type="function">
    <text evidence="1 2">Inhibits the host uracil-DNA glycosylase (UDG), an enzyme which removes uracil residues from DNA by the base excision repair (PubMed:21542855). Interacts with host uracil-DNA glycosylase and prevents the latter from binding to DNA (By similarity). Since the viral DNA polymerase efficiently incorporates dUMP into DNA, the virus needs to prevent the deleterious effect caused by host UDG when it eliminates uracil residues present in the viral genome (By similarity).</text>
</comment>
<comment type="subunit">
    <text evidence="1">Homodimer. Interacts with host UDG; this interaction inhibits the uracil-DNA glycosylase.</text>
</comment>
<comment type="similarity">
    <text evidence="3">Belongs to the phi29likevirus protein p56 family.</text>
</comment>
<keyword id="KW-0244">Early protein</keyword>
<keyword id="KW-0945">Host-virus interaction</keyword>
<keyword id="KW-1185">Reference proteome</keyword>